<feature type="chain" id="PRO_0000155687" description="Endonuclease NucS">
    <location>
        <begin position="1"/>
        <end position="223"/>
    </location>
</feature>
<organism>
    <name type="scientific">Streptomyces coelicolor (strain ATCC BAA-471 / A3(2) / M145)</name>
    <dbReference type="NCBI Taxonomy" id="100226"/>
    <lineage>
        <taxon>Bacteria</taxon>
        <taxon>Bacillati</taxon>
        <taxon>Actinomycetota</taxon>
        <taxon>Actinomycetes</taxon>
        <taxon>Kitasatosporales</taxon>
        <taxon>Streptomycetaceae</taxon>
        <taxon>Streptomyces</taxon>
        <taxon>Streptomyces albidoflavus group</taxon>
    </lineage>
</organism>
<protein>
    <recommendedName>
        <fullName evidence="1">Endonuclease NucS</fullName>
        <ecNumber evidence="1">3.1.-.-</ecNumber>
    </recommendedName>
</protein>
<reference key="1">
    <citation type="journal article" date="2002" name="Nature">
        <title>Complete genome sequence of the model actinomycete Streptomyces coelicolor A3(2).</title>
        <authorList>
            <person name="Bentley S.D."/>
            <person name="Chater K.F."/>
            <person name="Cerdeno-Tarraga A.-M."/>
            <person name="Challis G.L."/>
            <person name="Thomson N.R."/>
            <person name="James K.D."/>
            <person name="Harris D.E."/>
            <person name="Quail M.A."/>
            <person name="Kieser H."/>
            <person name="Harper D."/>
            <person name="Bateman A."/>
            <person name="Brown S."/>
            <person name="Chandra G."/>
            <person name="Chen C.W."/>
            <person name="Collins M."/>
            <person name="Cronin A."/>
            <person name="Fraser A."/>
            <person name="Goble A."/>
            <person name="Hidalgo J."/>
            <person name="Hornsby T."/>
            <person name="Howarth S."/>
            <person name="Huang C.-H."/>
            <person name="Kieser T."/>
            <person name="Larke L."/>
            <person name="Murphy L.D."/>
            <person name="Oliver K."/>
            <person name="O'Neil S."/>
            <person name="Rabbinowitsch E."/>
            <person name="Rajandream M.A."/>
            <person name="Rutherford K.M."/>
            <person name="Rutter S."/>
            <person name="Seeger K."/>
            <person name="Saunders D."/>
            <person name="Sharp S."/>
            <person name="Squares R."/>
            <person name="Squares S."/>
            <person name="Taylor K."/>
            <person name="Warren T."/>
            <person name="Wietzorrek A."/>
            <person name="Woodward J.R."/>
            <person name="Barrell B.G."/>
            <person name="Parkhill J."/>
            <person name="Hopwood D.A."/>
        </authorList>
    </citation>
    <scope>NUCLEOTIDE SEQUENCE [LARGE SCALE GENOMIC DNA]</scope>
    <source>
        <strain>ATCC BAA-471 / A3(2) / M145</strain>
    </source>
</reference>
<evidence type="ECO:0000255" key="1">
    <source>
        <dbReference type="HAMAP-Rule" id="MF_00722"/>
    </source>
</evidence>
<evidence type="ECO:0000305" key="2"/>
<comment type="function">
    <text evidence="1">Cleaves both 3' and 5' ssDNA extremities of branched DNA structures.</text>
</comment>
<comment type="subcellular location">
    <subcellularLocation>
        <location evidence="1">Cytoplasm</location>
    </subcellularLocation>
</comment>
<comment type="similarity">
    <text evidence="1">Belongs to the NucS endonuclease family.</text>
</comment>
<comment type="sequence caution" evidence="2">
    <conflict type="erroneous initiation">
        <sequence resource="EMBL-CDS" id="CAB94559"/>
    </conflict>
</comment>
<dbReference type="EC" id="3.1.-.-" evidence="1"/>
<dbReference type="EMBL" id="AL939123">
    <property type="protein sequence ID" value="CAB94559.1"/>
    <property type="status" value="ALT_INIT"/>
    <property type="molecule type" value="Genomic_DNA"/>
</dbReference>
<dbReference type="RefSeq" id="NP_629527.1">
    <property type="nucleotide sequence ID" value="NC_003888.3"/>
</dbReference>
<dbReference type="RefSeq" id="WP_007387684.1">
    <property type="nucleotide sequence ID" value="NZ_VNID01000011.1"/>
</dbReference>
<dbReference type="SMR" id="Q9K4C3"/>
<dbReference type="STRING" id="100226.gene:17763040"/>
<dbReference type="PaxDb" id="100226-SCO5388"/>
<dbReference type="GeneID" id="91383645"/>
<dbReference type="KEGG" id="sco:SCO5388"/>
<dbReference type="PATRIC" id="fig|100226.15.peg.5469"/>
<dbReference type="eggNOG" id="COG1637">
    <property type="taxonomic scope" value="Bacteria"/>
</dbReference>
<dbReference type="HOGENOM" id="CLU_069350_0_0_11"/>
<dbReference type="InParanoid" id="Q9K4C3"/>
<dbReference type="OrthoDB" id="3344925at2"/>
<dbReference type="PhylomeDB" id="Q9K4C3"/>
<dbReference type="Proteomes" id="UP000001973">
    <property type="component" value="Chromosome"/>
</dbReference>
<dbReference type="GO" id="GO:0005737">
    <property type="term" value="C:cytoplasm"/>
    <property type="evidence" value="ECO:0007669"/>
    <property type="project" value="UniProtKB-SubCell"/>
</dbReference>
<dbReference type="GO" id="GO:0003677">
    <property type="term" value="F:DNA binding"/>
    <property type="evidence" value="ECO:0007669"/>
    <property type="project" value="UniProtKB-KW"/>
</dbReference>
<dbReference type="GO" id="GO:0000014">
    <property type="term" value="F:single-stranded DNA endodeoxyribonuclease activity"/>
    <property type="evidence" value="ECO:0007669"/>
    <property type="project" value="UniProtKB-UniRule"/>
</dbReference>
<dbReference type="CDD" id="cd22341">
    <property type="entry name" value="NucS-like"/>
    <property type="match status" value="1"/>
</dbReference>
<dbReference type="Gene3D" id="2.70.180.20">
    <property type="match status" value="1"/>
</dbReference>
<dbReference type="Gene3D" id="3.40.1350.10">
    <property type="match status" value="1"/>
</dbReference>
<dbReference type="HAMAP" id="MF_00722">
    <property type="entry name" value="NucS"/>
    <property type="match status" value="1"/>
</dbReference>
<dbReference type="InterPro" id="IPR002793">
    <property type="entry name" value="Endonuclease_NucS"/>
</dbReference>
<dbReference type="InterPro" id="IPR048301">
    <property type="entry name" value="NucS_C"/>
</dbReference>
<dbReference type="InterPro" id="IPR048302">
    <property type="entry name" value="NucS_N"/>
</dbReference>
<dbReference type="InterPro" id="IPR049173">
    <property type="entry name" value="NucS_N_sf"/>
</dbReference>
<dbReference type="InterPro" id="IPR011856">
    <property type="entry name" value="tRNA_endonuc-like_dom_sf"/>
</dbReference>
<dbReference type="NCBIfam" id="NF002876">
    <property type="entry name" value="PRK03298.1"/>
    <property type="match status" value="1"/>
</dbReference>
<dbReference type="PANTHER" id="PTHR38814">
    <property type="entry name" value="ENDONUCLEASE NUCS"/>
    <property type="match status" value="1"/>
</dbReference>
<dbReference type="PANTHER" id="PTHR38814:SF1">
    <property type="entry name" value="ENDONUCLEASE NUCS"/>
    <property type="match status" value="1"/>
</dbReference>
<dbReference type="Pfam" id="PF01939">
    <property type="entry name" value="NucS_C"/>
    <property type="match status" value="1"/>
</dbReference>
<dbReference type="Pfam" id="PF21003">
    <property type="entry name" value="NucS_N"/>
    <property type="match status" value="1"/>
</dbReference>
<keyword id="KW-0963">Cytoplasm</keyword>
<keyword id="KW-0238">DNA-binding</keyword>
<keyword id="KW-0255">Endonuclease</keyword>
<keyword id="KW-0378">Hydrolase</keyword>
<keyword id="KW-0540">Nuclease</keyword>
<keyword id="KW-1185">Reference proteome</keyword>
<proteinExistence type="inferred from homology"/>
<name>NUCS_STRCO</name>
<sequence length="223" mass="24601">MRLVIARCSVDYAGRLTAHLPSAPRLILVKADGSVSIHADDRAYKPLNWMSPPCALKEGTGEEEGVWTVVNKAGEKLIITMEEILHDSSHELGVDPGLIKDGVEAHLQELLADRIDTLGEGYTLIRREYMTAIGPVDILCRDAQGGTVAVEIKRRGEIDGVEQLTRYLELLNRDPHLAPVRGVFAAQEIKPQARVLATDRGIGCQVLDYDALRGIEDDKLRLF</sequence>
<gene>
    <name evidence="1" type="primary">nucS</name>
    <name type="ordered locus">SCO5388</name>
    <name type="ORF">2SC6G5.32c</name>
</gene>
<accession>Q9K4C3</accession>